<comment type="function">
    <text evidence="3">Inward rectifier potassium channel that forms the pore of ATP-sensitive potassium channels (KATP), regulating potassium permeability as a function of cytoplasmic ATP and ADP concentrations in many different cells (By similarity). Inward rectifier potassium channels are characterized by a greater tendency to allow potassium to flow into the cell rather than out of it. Their voltage dependence is regulated by the concentration of extracellular potassium; as external potassium is raised, the voltage range of the channel opening shifts to more positive voltages. The inward rectification is mainly due to the blockage of outward current by internal magnesium. Can be blocked by extracellular barium (By similarity). In pancreatic cells, it forms KATP channels with ABCC8/SUR1 (By similarity). Can form cardiac and smooth muscle-type KATP channels with ABCC9 (By similarity).</text>
</comment>
<comment type="catalytic activity">
    <reaction evidence="3">
        <text>K(+)(in) = K(+)(out)</text>
        <dbReference type="Rhea" id="RHEA:29463"/>
        <dbReference type="ChEBI" id="CHEBI:29103"/>
    </reaction>
</comment>
<comment type="activity regulation">
    <text evidence="3">KATP channels are regulated by cytoplasmic ATP/ADP ratios; ATP inhibits the channel by closing the pore, while ADP activates the channel. Activated by phosphatidylinositol 4,5-biphosphate (PtdIns(4,5)P2).</text>
</comment>
<comment type="subunit">
    <text evidence="3">Homotetramer; the homotetramer binds four ATP molecules (one ATP per subunit). Forms an heterooctamer with ABCC8/SUR1; one KCNJ11 homotetramer interacts with four ABCC8/SUR1 molecules. Interacts with ABCC9/SUR2.</text>
</comment>
<comment type="subcellular location">
    <subcellularLocation>
        <location evidence="3">Membrane</location>
        <topology evidence="3">Multi-pass membrane protein</topology>
    </subcellularLocation>
</comment>
<comment type="domain">
    <text evidence="2">There are two PtdIns(4,5)P2 binding sites: A canonical site where the phosphate groups of one PtdIns(4,5)P2 molecule are coordinated at least by residues Lys-67, Trp-68 and Arg-176; a non-canonical site where the second PtdIns(4,5)P2 molecule is coordinated by both KCNJ11 and ABCC8/SUR1 residues.</text>
</comment>
<comment type="PTM">
    <text evidence="1">Phosphorylation by MAPK1 results in changes in channel gating that destabilize the closed states and reduce the ATP sensitivity.</text>
</comment>
<comment type="similarity">
    <text evidence="4">Belongs to the inward rectifier-type potassium channel (TC 1.A.2.1) family. KCNJ11 subfamily.</text>
</comment>
<protein>
    <recommendedName>
        <fullName>ATP-sensitive inward rectifier potassium channel 11</fullName>
    </recommendedName>
    <alternativeName>
        <fullName>Inward rectifier K(+) channel Kir6.2</fullName>
    </alternativeName>
    <alternativeName>
        <fullName>Potassium channel, inwardly rectifying subfamily J member 11</fullName>
    </alternativeName>
</protein>
<dbReference type="EMBL" id="AF006262">
    <property type="protein sequence ID" value="AAB61473.1"/>
    <property type="molecule type" value="mRNA"/>
</dbReference>
<dbReference type="RefSeq" id="NP_001075486.1">
    <property type="nucleotide sequence ID" value="NM_001082017.1"/>
</dbReference>
<dbReference type="SMR" id="O02822"/>
<dbReference type="FunCoup" id="O02822">
    <property type="interactions" value="19"/>
</dbReference>
<dbReference type="GeneID" id="100008648"/>
<dbReference type="KEGG" id="ocu:100008648"/>
<dbReference type="CTD" id="3767"/>
<dbReference type="InParanoid" id="O02822"/>
<dbReference type="OrthoDB" id="273257at2759"/>
<dbReference type="Proteomes" id="UP000001811">
    <property type="component" value="Unplaced"/>
</dbReference>
<dbReference type="GO" id="GO:0034702">
    <property type="term" value="C:monoatomic ion channel complex"/>
    <property type="evidence" value="ECO:0007669"/>
    <property type="project" value="UniProtKB-KW"/>
</dbReference>
<dbReference type="GO" id="GO:0005886">
    <property type="term" value="C:plasma membrane"/>
    <property type="evidence" value="ECO:0007669"/>
    <property type="project" value="TreeGrafter"/>
</dbReference>
<dbReference type="GO" id="GO:0005524">
    <property type="term" value="F:ATP binding"/>
    <property type="evidence" value="ECO:0007669"/>
    <property type="project" value="UniProtKB-KW"/>
</dbReference>
<dbReference type="GO" id="GO:0015272">
    <property type="term" value="F:ATP-activated inward rectifier potassium channel activity"/>
    <property type="evidence" value="ECO:0007669"/>
    <property type="project" value="InterPro"/>
</dbReference>
<dbReference type="GO" id="GO:0046872">
    <property type="term" value="F:metal ion binding"/>
    <property type="evidence" value="ECO:0007669"/>
    <property type="project" value="UniProtKB-KW"/>
</dbReference>
<dbReference type="GO" id="GO:1990573">
    <property type="term" value="P:potassium ion import across plasma membrane"/>
    <property type="evidence" value="ECO:0007669"/>
    <property type="project" value="TreeGrafter"/>
</dbReference>
<dbReference type="GO" id="GO:0034765">
    <property type="term" value="P:regulation of monoatomic ion transmembrane transport"/>
    <property type="evidence" value="ECO:0007669"/>
    <property type="project" value="TreeGrafter"/>
</dbReference>
<dbReference type="FunFam" id="1.10.287.70:FF:000050">
    <property type="entry name" value="ATP-sensitive inward rectifier potassium channel 11"/>
    <property type="match status" value="1"/>
</dbReference>
<dbReference type="FunFam" id="2.60.40.1400:FF:000001">
    <property type="entry name" value="G protein-activated inward rectifier potassium channel 2"/>
    <property type="match status" value="1"/>
</dbReference>
<dbReference type="Gene3D" id="1.10.287.70">
    <property type="match status" value="1"/>
</dbReference>
<dbReference type="Gene3D" id="2.60.40.1400">
    <property type="entry name" value="G protein-activated inward rectifier potassium channel 1"/>
    <property type="match status" value="1"/>
</dbReference>
<dbReference type="InterPro" id="IPR014756">
    <property type="entry name" value="Ig_E-set"/>
</dbReference>
<dbReference type="InterPro" id="IPR041647">
    <property type="entry name" value="IRK_C"/>
</dbReference>
<dbReference type="InterPro" id="IPR016449">
    <property type="entry name" value="K_chnl_inward-rec_Kir"/>
</dbReference>
<dbReference type="InterPro" id="IPR003279">
    <property type="entry name" value="K_chnl_inward-rec_Kir6.2"/>
</dbReference>
<dbReference type="InterPro" id="IPR013518">
    <property type="entry name" value="K_chnl_inward-rec_Kir_cyto"/>
</dbReference>
<dbReference type="InterPro" id="IPR040445">
    <property type="entry name" value="Kir_TM"/>
</dbReference>
<dbReference type="PANTHER" id="PTHR11767:SF44">
    <property type="entry name" value="ATP-SENSITIVE INWARD RECTIFIER POTASSIUM CHANNEL 11"/>
    <property type="match status" value="1"/>
</dbReference>
<dbReference type="PANTHER" id="PTHR11767">
    <property type="entry name" value="INWARD RECTIFIER POTASSIUM CHANNEL"/>
    <property type="match status" value="1"/>
</dbReference>
<dbReference type="Pfam" id="PF01007">
    <property type="entry name" value="IRK"/>
    <property type="match status" value="1"/>
</dbReference>
<dbReference type="Pfam" id="PF17655">
    <property type="entry name" value="IRK_C"/>
    <property type="match status" value="1"/>
</dbReference>
<dbReference type="PIRSF" id="PIRSF005465">
    <property type="entry name" value="GIRK_kir"/>
    <property type="match status" value="1"/>
</dbReference>
<dbReference type="PRINTS" id="PR01332">
    <property type="entry name" value="KIR62CHANNEL"/>
</dbReference>
<dbReference type="PRINTS" id="PR01320">
    <property type="entry name" value="KIRCHANNEL"/>
</dbReference>
<dbReference type="SUPFAM" id="SSF81296">
    <property type="entry name" value="E set domains"/>
    <property type="match status" value="1"/>
</dbReference>
<dbReference type="SUPFAM" id="SSF81324">
    <property type="entry name" value="Voltage-gated potassium channels"/>
    <property type="match status" value="1"/>
</dbReference>
<feature type="chain" id="PRO_0000154959" description="ATP-sensitive inward rectifier potassium channel 11">
    <location>
        <begin position="1"/>
        <end position="390"/>
    </location>
</feature>
<feature type="topological domain" description="Cytoplasmic" evidence="4">
    <location>
        <begin position="1"/>
        <end position="65"/>
    </location>
</feature>
<feature type="transmembrane region" description="Helical; Name=M1" evidence="3">
    <location>
        <begin position="66"/>
        <end position="92"/>
    </location>
</feature>
<feature type="topological domain" description="Extracellular" evidence="4">
    <location>
        <begin position="93"/>
        <end position="116"/>
    </location>
</feature>
<feature type="intramembrane region" description="Discontinuously helical; Pore-forming" evidence="3">
    <location>
        <begin position="117"/>
        <end position="133"/>
    </location>
</feature>
<feature type="topological domain" description="Extracellular" evidence="4">
    <location>
        <begin position="134"/>
        <end position="142"/>
    </location>
</feature>
<feature type="transmembrane region" description="Helical; Name=M2" evidence="3">
    <location>
        <begin position="143"/>
        <end position="171"/>
    </location>
</feature>
<feature type="topological domain" description="Cytoplasmic" evidence="4">
    <location>
        <begin position="172"/>
        <end position="390"/>
    </location>
</feature>
<feature type="short sequence motif" description="Selectivity filter" evidence="4">
    <location>
        <begin position="130"/>
        <end position="135"/>
    </location>
</feature>
<feature type="binding site" evidence="3">
    <location>
        <position position="48"/>
    </location>
    <ligand>
        <name>ATP</name>
        <dbReference type="ChEBI" id="CHEBI:30616"/>
        <note>inhibitor</note>
    </ligand>
</feature>
<feature type="binding site" evidence="3">
    <location>
        <position position="50"/>
    </location>
    <ligand>
        <name>ATP</name>
        <dbReference type="ChEBI" id="CHEBI:30616"/>
        <note>inhibitor</note>
    </ligand>
</feature>
<feature type="binding site" evidence="3">
    <location>
        <position position="130"/>
    </location>
    <ligand>
        <name>K(+)</name>
        <dbReference type="ChEBI" id="CHEBI:29103"/>
        <label>1</label>
        <note>ligand shared between the four subunits of the homotetramer</note>
    </ligand>
</feature>
<feature type="binding site" evidence="3">
    <location>
        <position position="133"/>
    </location>
    <ligand>
        <name>K(+)</name>
        <dbReference type="ChEBI" id="CHEBI:29103"/>
        <label>2</label>
        <note>ligand shared between the four subunits of the homotetramer</note>
    </ligand>
</feature>
<feature type="binding site" evidence="2">
    <location>
        <position position="176"/>
    </location>
    <ligand>
        <name>a 1,2-diacyl-sn-glycero-3-phospho-(1D-myo-inositol-4,5-bisphosphate)</name>
        <dbReference type="ChEBI" id="CHEBI:58456"/>
    </ligand>
</feature>
<feature type="binding site" evidence="3">
    <location>
        <position position="330"/>
    </location>
    <ligand>
        <name>ATP</name>
        <dbReference type="ChEBI" id="CHEBI:30616"/>
        <note>inhibitor</note>
    </ligand>
</feature>
<feature type="site" description="Role in the control of polyamine-mediated channel gating and in the blocking by intracellular magnesium" evidence="1">
    <location>
        <position position="160"/>
    </location>
</feature>
<feature type="modified residue" description="Phosphothreonine; by MAPK1" evidence="3">
    <location>
        <position position="341"/>
    </location>
</feature>
<feature type="modified residue" description="Phosphoserine; by MAPK1" evidence="3">
    <location>
        <position position="385"/>
    </location>
</feature>
<feature type="disulfide bond" evidence="3">
    <location>
        <begin position="110"/>
        <end position="142"/>
    </location>
</feature>
<organism>
    <name type="scientific">Oryctolagus cuniculus</name>
    <name type="common">Rabbit</name>
    <dbReference type="NCBI Taxonomy" id="9986"/>
    <lineage>
        <taxon>Eukaryota</taxon>
        <taxon>Metazoa</taxon>
        <taxon>Chordata</taxon>
        <taxon>Craniata</taxon>
        <taxon>Vertebrata</taxon>
        <taxon>Euteleostomi</taxon>
        <taxon>Mammalia</taxon>
        <taxon>Eutheria</taxon>
        <taxon>Euarchontoglires</taxon>
        <taxon>Glires</taxon>
        <taxon>Lagomorpha</taxon>
        <taxon>Leporidae</taxon>
        <taxon>Oryctolagus</taxon>
    </lineage>
</organism>
<evidence type="ECO:0000250" key="1"/>
<evidence type="ECO:0000250" key="2">
    <source>
        <dbReference type="UniProtKB" id="P70673"/>
    </source>
</evidence>
<evidence type="ECO:0000250" key="3">
    <source>
        <dbReference type="UniProtKB" id="Q14654"/>
    </source>
</evidence>
<evidence type="ECO:0000305" key="4"/>
<sequence>MLSRKGIIPEEYVLTRLAEDPAEPRYRARERRARFVSKKGNCNVAHKNIREQGRFLQDVFTTLVDLKWTHTLLIFTMSFLCSWLLFAMVWWLIAFAHGDLAPGEGAAVPCVTSIHSFSSAFLFSIEVQVTIGFGGRMVTEECPLAILILIVQNIVGLMINAIMLGCIFMKTAQAHRRAETLIFSKHAVIALRQGRLCFMLRVGDLRKSMIISATIHMQVVRKTTSPEGEVVPLHQVDIPMENGVGGNSIFLVAPLIIHHVIDANSPLYDLAPSDLHHHQDLEIIVILEGVVETTGITTQARTSYLADEILWGQRFVPIVAEEDGRYSVDYSKFGNTVKVPTPLCTARQLDEDRSLLDALTLTSARGPLRKRSVPVAKAKPKFSISPDSLS</sequence>
<name>KCJ11_RABIT</name>
<keyword id="KW-0067">ATP-binding</keyword>
<keyword id="KW-1015">Disulfide bond</keyword>
<keyword id="KW-0407">Ion channel</keyword>
<keyword id="KW-0406">Ion transport</keyword>
<keyword id="KW-0472">Membrane</keyword>
<keyword id="KW-0479">Metal-binding</keyword>
<keyword id="KW-0547">Nucleotide-binding</keyword>
<keyword id="KW-0597">Phosphoprotein</keyword>
<keyword id="KW-0630">Potassium</keyword>
<keyword id="KW-0633">Potassium transport</keyword>
<keyword id="KW-1185">Reference proteome</keyword>
<keyword id="KW-0812">Transmembrane</keyword>
<keyword id="KW-1133">Transmembrane helix</keyword>
<keyword id="KW-0813">Transport</keyword>
<keyword id="KW-0851">Voltage-gated channel</keyword>
<reference key="1">
    <citation type="submission" date="1997-05" db="EMBL/GenBank/DDBJ databases">
        <title>Rabbit cardiac ATP-sensitive potassium channel Kir6.2.</title>
        <authorList>
            <person name="Janecki M."/>
            <person name="O'Rourke B."/>
            <person name="Marban E."/>
        </authorList>
    </citation>
    <scope>NUCLEOTIDE SEQUENCE [MRNA]</scope>
    <source>
        <tissue>Heart</tissue>
    </source>
</reference>
<proteinExistence type="evidence at transcript level"/>
<gene>
    <name type="primary">KCNJ11</name>
    <name type="synonym">KIR62</name>
</gene>
<accession>O02822</accession>